<comment type="subunit">
    <text evidence="1 3 4 5 6">Found in a complex composed of MORF4L1, MRFAP1 and RB1. Interacts via its N-terminus with MORF4L1. Interacts with CSTB and MORF4L2.</text>
</comment>
<comment type="interaction">
    <interactant intactId="EBI-995714">
        <id>Q9Y605</id>
    </interactant>
    <interactant intactId="EBI-640741">
        <id>P01023</id>
        <label>A2M</label>
    </interactant>
    <organismsDiffer>false</organismsDiffer>
    <experiments>3</experiments>
</comment>
<comment type="interaction">
    <interactant intactId="EBI-995714">
        <id>Q9Y605</id>
    </interactant>
    <interactant intactId="EBI-11096309">
        <id>Q9NYB9-2</id>
        <label>ABI2</label>
    </interactant>
    <organismsDiffer>false</organismsDiffer>
    <experiments>5</experiments>
</comment>
<comment type="interaction">
    <interactant intactId="EBI-995714">
        <id>Q9Y605</id>
    </interactant>
    <interactant intactId="EBI-742038">
        <id>Q9P2A4</id>
        <label>ABI3</label>
    </interactant>
    <organismsDiffer>false</organismsDiffer>
    <experiments>3</experiments>
</comment>
<comment type="interaction">
    <interactant intactId="EBI-995714">
        <id>Q9Y605</id>
    </interactant>
    <interactant intactId="EBI-21535880">
        <id>Q92870-2</id>
        <label>APBB2</label>
    </interactant>
    <organismsDiffer>false</organismsDiffer>
    <experiments>3</experiments>
</comment>
<comment type="interaction">
    <interactant intactId="EBI-995714">
        <id>Q9Y605</id>
    </interactant>
    <interactant intactId="EBI-930964">
        <id>P54253</id>
        <label>ATXN1</label>
    </interactant>
    <organismsDiffer>false</organismsDiffer>
    <experiments>6</experiments>
</comment>
<comment type="interaction">
    <interactant intactId="EBI-995714">
        <id>Q9Y605</id>
    </interactant>
    <interactant intactId="EBI-2837444">
        <id>Q8WUW1</id>
        <label>BRK1</label>
    </interactant>
    <organismsDiffer>false</organismsDiffer>
    <experiments>6</experiments>
</comment>
<comment type="interaction">
    <interactant intactId="EBI-995714">
        <id>Q9Y605</id>
    </interactant>
    <interactant intactId="EBI-10329620">
        <id>Q9H972</id>
        <label>C14orf93</label>
    </interactant>
    <organismsDiffer>false</organismsDiffer>
    <experiments>4</experiments>
</comment>
<comment type="interaction">
    <interactant intactId="EBI-995714">
        <id>Q9Y605</id>
    </interactant>
    <interactant intactId="EBI-2837036">
        <id>Q6ZUJ4</id>
        <label>C3orf62</label>
    </interactant>
    <organismsDiffer>false</organismsDiffer>
    <experiments>3</experiments>
</comment>
<comment type="interaction">
    <interactant intactId="EBI-995714">
        <id>Q9Y605</id>
    </interactant>
    <interactant intactId="EBI-3893101">
        <id>Q969G5</id>
        <label>CAVIN3</label>
    </interactant>
    <organismsDiffer>false</organismsDiffer>
    <experiments>6</experiments>
</comment>
<comment type="interaction">
    <interactant intactId="EBI-995714">
        <id>Q9Y605</id>
    </interactant>
    <interactant intactId="EBI-10749669">
        <id>Q8IYE0</id>
        <label>CCDC146</label>
    </interactant>
    <organismsDiffer>false</organismsDiffer>
    <experiments>3</experiments>
</comment>
<comment type="interaction">
    <interactant intactId="EBI-995714">
        <id>Q9Y605</id>
    </interactant>
    <interactant intactId="EBI-10303987">
        <id>Q9UHG0</id>
        <label>DCDC2</label>
    </interactant>
    <organismsDiffer>false</organismsDiffer>
    <experiments>3</experiments>
</comment>
<comment type="interaction">
    <interactant intactId="EBI-995714">
        <id>Q9Y605</id>
    </interactant>
    <interactant intactId="EBI-12593112">
        <id>O75190-2</id>
        <label>DNAJB6</label>
    </interactant>
    <organismsDiffer>false</organismsDiffer>
    <experiments>3</experiments>
</comment>
<comment type="interaction">
    <interactant intactId="EBI-995714">
        <id>Q9Y605</id>
    </interactant>
    <interactant intactId="EBI-10968534">
        <id>P50570-2</id>
        <label>DNM2</label>
    </interactant>
    <organismsDiffer>false</organismsDiffer>
    <experiments>3</experiments>
</comment>
<comment type="interaction">
    <interactant intactId="EBI-995714">
        <id>Q9Y605</id>
    </interactant>
    <interactant intactId="EBI-744973">
        <id>Q9C005</id>
        <label>DPY30</label>
    </interactant>
    <organismsDiffer>false</organismsDiffer>
    <experiments>3</experiments>
</comment>
<comment type="interaction">
    <interactant intactId="EBI-995714">
        <id>Q9Y605</id>
    </interactant>
    <interactant intactId="EBI-11958845">
        <id>O94868-3</id>
        <label>FCHSD2</label>
    </interactant>
    <organismsDiffer>false</organismsDiffer>
    <experiments>3</experiments>
</comment>
<comment type="interaction">
    <interactant intactId="EBI-995714">
        <id>Q9Y605</id>
    </interactant>
    <interactant intactId="EBI-11110431">
        <id>Q8TB36</id>
        <label>GDAP1</label>
    </interactant>
    <organismsDiffer>false</organismsDiffer>
    <experiments>3</experiments>
</comment>
<comment type="interaction">
    <interactant intactId="EBI-995714">
        <id>Q9Y605</id>
    </interactant>
    <interactant intactId="EBI-10181260">
        <id>Q08AF8</id>
        <label>GOLGA8G</label>
    </interactant>
    <organismsDiffer>false</organismsDiffer>
    <experiments>3</experiments>
</comment>
<comment type="interaction">
    <interactant intactId="EBI-995714">
        <id>Q9Y605</id>
    </interactant>
    <interactant intactId="EBI-350145">
        <id>P01112</id>
        <label>HRAS</label>
    </interactant>
    <organismsDiffer>false</organismsDiffer>
    <experiments>3</experiments>
</comment>
<comment type="interaction">
    <interactant intactId="EBI-995714">
        <id>Q9Y605</id>
    </interactant>
    <interactant intactId="EBI-466029">
        <id>P42858</id>
        <label>HTT</label>
    </interactant>
    <organismsDiffer>false</organismsDiffer>
    <experiments>19</experiments>
</comment>
<comment type="interaction">
    <interactant intactId="EBI-995714">
        <id>Q9Y605</id>
    </interactant>
    <interactant intactId="EBI-10975473">
        <id>O60333-2</id>
        <label>KIF1B</label>
    </interactant>
    <organismsDiffer>false</organismsDiffer>
    <experiments>3</experiments>
</comment>
<comment type="interaction">
    <interactant intactId="EBI-995714">
        <id>Q9Y605</id>
    </interactant>
    <interactant intactId="EBI-14069005">
        <id>Q9BVG8-5</id>
        <label>KIFC3</label>
    </interactant>
    <organismsDiffer>false</organismsDiffer>
    <experiments>3</experiments>
</comment>
<comment type="interaction">
    <interactant intactId="EBI-995714">
        <id>Q9Y605</id>
    </interactant>
    <interactant intactId="EBI-948266">
        <id>O14901</id>
        <label>KLF11</label>
    </interactant>
    <organismsDiffer>false</organismsDiffer>
    <experiments>3</experiments>
</comment>
<comment type="interaction">
    <interactant intactId="EBI-995714">
        <id>Q9Y605</id>
    </interactant>
    <interactant intactId="EBI-399246">
        <id>Q9UBU8</id>
        <label>MORF4L1</label>
    </interactant>
    <organismsDiffer>false</organismsDiffer>
    <experiments>10</experiments>
</comment>
<comment type="interaction">
    <interactant intactId="EBI-995714">
        <id>Q9Y605</id>
    </interactant>
    <interactant intactId="EBI-10288852">
        <id>Q9UBU8-2</id>
        <label>MORF4L1</label>
    </interactant>
    <organismsDiffer>false</organismsDiffer>
    <experiments>15</experiments>
</comment>
<comment type="interaction">
    <interactant intactId="EBI-995714">
        <id>Q9Y605</id>
    </interactant>
    <interactant intactId="EBI-399257">
        <id>Q15014</id>
        <label>MORF4L2</label>
    </interactant>
    <organismsDiffer>false</organismsDiffer>
    <experiments>18</experiments>
</comment>
<comment type="interaction">
    <interactant intactId="EBI-995714">
        <id>Q9Y605</id>
    </interactant>
    <interactant intactId="EBI-748896">
        <id>Q96HT8</id>
        <label>MRFAP1L1</label>
    </interactant>
    <organismsDiffer>false</organismsDiffer>
    <experiments>9</experiments>
</comment>
<comment type="interaction">
    <interactant intactId="EBI-995714">
        <id>Q9Y605</id>
    </interactant>
    <interactant intactId="EBI-3923617">
        <id>Q9H2K0</id>
        <label>MTIF3</label>
    </interactant>
    <organismsDiffer>false</organismsDiffer>
    <experiments>3</experiments>
</comment>
<comment type="interaction">
    <interactant intactId="EBI-995714">
        <id>Q9Y605</id>
    </interactant>
    <interactant intactId="EBI-634289">
        <id>Q9H0N5</id>
        <label>PCBD2</label>
    </interactant>
    <organismsDiffer>false</organismsDiffer>
    <experiments>3</experiments>
</comment>
<comment type="interaction">
    <interactant intactId="EBI-995714">
        <id>Q9Y605</id>
    </interactant>
    <interactant intactId="EBI-2116102">
        <id>Q96NZ9</id>
        <label>PRAP1</label>
    </interactant>
    <organismsDiffer>false</organismsDiffer>
    <experiments>3</experiments>
</comment>
<comment type="interaction">
    <interactant intactId="EBI-995714">
        <id>Q9Y605</id>
    </interactant>
    <interactant intactId="EBI-1383852">
        <id>P54646</id>
        <label>PRKAA2</label>
    </interactant>
    <organismsDiffer>false</organismsDiffer>
    <experiments>3</experiments>
</comment>
<comment type="interaction">
    <interactant intactId="EBI-995714">
        <id>Q9Y605</id>
    </interactant>
    <interactant intactId="EBI-749195">
        <id>P60891</id>
        <label>PRPS1</label>
    </interactant>
    <organismsDiffer>false</organismsDiffer>
    <experiments>3</experiments>
</comment>
<comment type="interaction">
    <interactant intactId="EBI-995714">
        <id>Q9Y605</id>
    </interactant>
    <interactant intactId="EBI-11047108">
        <id>P49768-2</id>
        <label>PSEN1</label>
    </interactant>
    <organismsDiffer>false</organismsDiffer>
    <experiments>3</experiments>
</comment>
<comment type="interaction">
    <interactant intactId="EBI-995714">
        <id>Q9Y605</id>
    </interactant>
    <interactant intactId="EBI-727004">
        <id>O00560</id>
        <label>SDCBP</label>
    </interactant>
    <organismsDiffer>false</organismsDiffer>
    <experiments>3</experiments>
</comment>
<comment type="interaction">
    <interactant intactId="EBI-995714">
        <id>Q9Y605</id>
    </interactant>
    <interactant intactId="EBI-747035">
        <id>Q9H788</id>
        <label>SH2D4A</label>
    </interactant>
    <organismsDiffer>false</organismsDiffer>
    <experiments>5</experiments>
</comment>
<comment type="interaction">
    <interactant intactId="EBI-995714">
        <id>Q9Y605</id>
    </interactant>
    <interactant intactId="EBI-298027">
        <id>Q2TAY7</id>
        <label>SMU1</label>
    </interactant>
    <organismsDiffer>false</organismsDiffer>
    <experiments>5</experiments>
</comment>
<comment type="interaction">
    <interactant intactId="EBI-995714">
        <id>Q9Y605</id>
    </interactant>
    <interactant intactId="EBI-5235340">
        <id>Q7Z699</id>
        <label>SPRED1</label>
    </interactant>
    <organismsDiffer>false</organismsDiffer>
    <experiments>3</experiments>
</comment>
<comment type="interaction">
    <interactant intactId="EBI-995714">
        <id>Q9Y605</id>
    </interactant>
    <interactant intactId="EBI-723127">
        <id>Q9H5I1</id>
        <label>SUV39H2</label>
    </interactant>
    <organismsDiffer>false</organismsDiffer>
    <experiments>2</experiments>
</comment>
<comment type="interaction">
    <interactant intactId="EBI-995714">
        <id>Q9Y605</id>
    </interactant>
    <interactant intactId="EBI-11523345">
        <id>Q8IYF3-3</id>
        <label>TEX11</label>
    </interactant>
    <organismsDiffer>false</organismsDiffer>
    <experiments>3</experiments>
</comment>
<comment type="interaction">
    <interactant intactId="EBI-995714">
        <id>Q9Y605</id>
    </interactant>
    <interactant intactId="EBI-25847109">
        <id>O14656-2</id>
        <label>TOR1A</label>
    </interactant>
    <organismsDiffer>false</organismsDiffer>
    <experiments>3</experiments>
</comment>
<comment type="interaction">
    <interactant intactId="EBI-995714">
        <id>Q9Y605</id>
    </interactant>
    <interactant intactId="EBI-10977815">
        <id>P07951-2</id>
        <label>TPM2</label>
    </interactant>
    <organismsDiffer>false</organismsDiffer>
    <experiments>3</experiments>
</comment>
<comment type="interaction">
    <interactant intactId="EBI-995714">
        <id>Q9Y605</id>
    </interactant>
    <interactant intactId="EBI-12371725">
        <id>Q96LD4-2</id>
        <label>TRIM47</label>
    </interactant>
    <organismsDiffer>false</organismsDiffer>
    <experiments>3</experiments>
</comment>
<comment type="interaction">
    <interactant intactId="EBI-995714">
        <id>Q9Y605</id>
    </interactant>
    <interactant intactId="EBI-12806590">
        <id>Q86WV8</id>
        <label>TSC1</label>
    </interactant>
    <organismsDiffer>false</organismsDiffer>
    <experiments>3</experiments>
</comment>
<comment type="interaction">
    <interactant intactId="EBI-995714">
        <id>Q9Y605</id>
    </interactant>
    <interactant intactId="EBI-594644">
        <id>P10599</id>
        <label>TXN</label>
    </interactant>
    <organismsDiffer>false</organismsDiffer>
    <experiments>3</experiments>
</comment>
<comment type="interaction">
    <interactant intactId="EBI-995714">
        <id>Q9Y605</id>
    </interactant>
    <interactant intactId="EBI-2932492">
        <id>Q99757</id>
        <label>TXN2</label>
    </interactant>
    <organismsDiffer>false</organismsDiffer>
    <experiments>3</experiments>
</comment>
<comment type="interaction">
    <interactant intactId="EBI-995714">
        <id>Q9Y605</id>
    </interactant>
    <interactant intactId="EBI-745871">
        <id>Q9HAC8</id>
        <label>UBTD1</label>
    </interactant>
    <organismsDiffer>false</organismsDiffer>
    <experiments>5</experiments>
</comment>
<comment type="interaction">
    <interactant intactId="EBI-995714">
        <id>Q9Y605</id>
    </interactant>
    <interactant intactId="EBI-1054584">
        <id>Q9BRT2</id>
        <label>UQCC2</label>
    </interactant>
    <organismsDiffer>false</organismsDiffer>
    <experiments>3</experiments>
</comment>
<comment type="interaction">
    <interactant intactId="EBI-995714">
        <id>Q9Y605</id>
    </interactant>
    <interactant intactId="EBI-720609">
        <id>O76024</id>
        <label>WFS1</label>
    </interactant>
    <organismsDiffer>false</organismsDiffer>
    <experiments>3</experiments>
</comment>
<comment type="interaction">
    <interactant intactId="EBI-995714">
        <id>Q9Y605</id>
    </interactant>
    <interactant intactId="EBI-625509">
        <id>Q8N720</id>
        <label>ZNF655</label>
    </interactant>
    <organismsDiffer>false</organismsDiffer>
    <experiments>3</experiments>
</comment>
<comment type="subcellular location">
    <subcellularLocation>
        <location evidence="3 4">Nucleus</location>
    </subcellularLocation>
    <subcellularLocation>
        <location evidence="3 4">Cytoplasm</location>
        <location evidence="3 4">Perinuclear region</location>
    </subcellularLocation>
    <text evidence="3 4">Colocalizes with MORF4L1 to cell nuclei.</text>
</comment>
<comment type="similarity">
    <text evidence="8">Belongs to the MORF4 family-associated protein family.</text>
</comment>
<accession>Q9Y605</accession>
<accession>B3KVT2</accession>
<accession>D3DVT3</accession>
<sequence>MRPLDIVELAEPEEVEVLEPEEDFEQFLLPVINEMREDIASLTREHGRAYLRNRSKLWEMDNMLIQIKTQVEASEESALNHLQNPGDAAEGRAAKRCEKAEEKAKEIAKMAEMLVELVRRIEKSESS</sequence>
<reference evidence="9" key="1">
    <citation type="submission" date="1998-12" db="EMBL/GenBank/DDBJ databases">
        <title>PGR1 is a novel T-cell activation protein.</title>
        <authorList>
            <person name="Juwana J.P."/>
            <person name="Gerlach K."/>
            <person name="Wadle A."/>
            <person name="Pfreundschuh M."/>
            <person name="Renner C."/>
        </authorList>
    </citation>
    <scope>NUCLEOTIDE SEQUENCE [GENOMIC DNA]</scope>
    <source>
        <tissue evidence="9">T-cell</tissue>
    </source>
</reference>
<reference evidence="9" key="2">
    <citation type="submission" date="2004-06" db="EMBL/GenBank/DDBJ databases">
        <title>Cloning of human full open reading frames in Gateway(TM) system entry vector (pDONR201).</title>
        <authorList>
            <person name="Ebert L."/>
            <person name="Schick M."/>
            <person name="Neubert P."/>
            <person name="Schatten R."/>
            <person name="Henze S."/>
            <person name="Korn B."/>
        </authorList>
    </citation>
    <scope>NUCLEOTIDE SEQUENCE [LARGE SCALE MRNA]</scope>
</reference>
<reference key="3">
    <citation type="journal article" date="2004" name="Nat. Genet.">
        <title>Complete sequencing and characterization of 21,243 full-length human cDNAs.</title>
        <authorList>
            <person name="Ota T."/>
            <person name="Suzuki Y."/>
            <person name="Nishikawa T."/>
            <person name="Otsuki T."/>
            <person name="Sugiyama T."/>
            <person name="Irie R."/>
            <person name="Wakamatsu A."/>
            <person name="Hayashi K."/>
            <person name="Sato H."/>
            <person name="Nagai K."/>
            <person name="Kimura K."/>
            <person name="Makita H."/>
            <person name="Sekine M."/>
            <person name="Obayashi M."/>
            <person name="Nishi T."/>
            <person name="Shibahara T."/>
            <person name="Tanaka T."/>
            <person name="Ishii S."/>
            <person name="Yamamoto J."/>
            <person name="Saito K."/>
            <person name="Kawai Y."/>
            <person name="Isono Y."/>
            <person name="Nakamura Y."/>
            <person name="Nagahari K."/>
            <person name="Murakami K."/>
            <person name="Yasuda T."/>
            <person name="Iwayanagi T."/>
            <person name="Wagatsuma M."/>
            <person name="Shiratori A."/>
            <person name="Sudo H."/>
            <person name="Hosoiri T."/>
            <person name="Kaku Y."/>
            <person name="Kodaira H."/>
            <person name="Kondo H."/>
            <person name="Sugawara M."/>
            <person name="Takahashi M."/>
            <person name="Kanda K."/>
            <person name="Yokoi T."/>
            <person name="Furuya T."/>
            <person name="Kikkawa E."/>
            <person name="Omura Y."/>
            <person name="Abe K."/>
            <person name="Kamihara K."/>
            <person name="Katsuta N."/>
            <person name="Sato K."/>
            <person name="Tanikawa M."/>
            <person name="Yamazaki M."/>
            <person name="Ninomiya K."/>
            <person name="Ishibashi T."/>
            <person name="Yamashita H."/>
            <person name="Murakawa K."/>
            <person name="Fujimori K."/>
            <person name="Tanai H."/>
            <person name="Kimata M."/>
            <person name="Watanabe M."/>
            <person name="Hiraoka S."/>
            <person name="Chiba Y."/>
            <person name="Ishida S."/>
            <person name="Ono Y."/>
            <person name="Takiguchi S."/>
            <person name="Watanabe S."/>
            <person name="Yosida M."/>
            <person name="Hotuta T."/>
            <person name="Kusano J."/>
            <person name="Kanehori K."/>
            <person name="Takahashi-Fujii A."/>
            <person name="Hara H."/>
            <person name="Tanase T.-O."/>
            <person name="Nomura Y."/>
            <person name="Togiya S."/>
            <person name="Komai F."/>
            <person name="Hara R."/>
            <person name="Takeuchi K."/>
            <person name="Arita M."/>
            <person name="Imose N."/>
            <person name="Musashino K."/>
            <person name="Yuuki H."/>
            <person name="Oshima A."/>
            <person name="Sasaki N."/>
            <person name="Aotsuka S."/>
            <person name="Yoshikawa Y."/>
            <person name="Matsunawa H."/>
            <person name="Ichihara T."/>
            <person name="Shiohata N."/>
            <person name="Sano S."/>
            <person name="Moriya S."/>
            <person name="Momiyama H."/>
            <person name="Satoh N."/>
            <person name="Takami S."/>
            <person name="Terashima Y."/>
            <person name="Suzuki O."/>
            <person name="Nakagawa S."/>
            <person name="Senoh A."/>
            <person name="Mizoguchi H."/>
            <person name="Goto Y."/>
            <person name="Shimizu F."/>
            <person name="Wakebe H."/>
            <person name="Hishigaki H."/>
            <person name="Watanabe T."/>
            <person name="Sugiyama A."/>
            <person name="Takemoto M."/>
            <person name="Kawakami B."/>
            <person name="Yamazaki M."/>
            <person name="Watanabe K."/>
            <person name="Kumagai A."/>
            <person name="Itakura S."/>
            <person name="Fukuzumi Y."/>
            <person name="Fujimori Y."/>
            <person name="Komiyama M."/>
            <person name="Tashiro H."/>
            <person name="Tanigami A."/>
            <person name="Fujiwara T."/>
            <person name="Ono T."/>
            <person name="Yamada K."/>
            <person name="Fujii Y."/>
            <person name="Ozaki K."/>
            <person name="Hirao M."/>
            <person name="Ohmori Y."/>
            <person name="Kawabata A."/>
            <person name="Hikiji T."/>
            <person name="Kobatake N."/>
            <person name="Inagaki H."/>
            <person name="Ikema Y."/>
            <person name="Okamoto S."/>
            <person name="Okitani R."/>
            <person name="Kawakami T."/>
            <person name="Noguchi S."/>
            <person name="Itoh T."/>
            <person name="Shigeta K."/>
            <person name="Senba T."/>
            <person name="Matsumura K."/>
            <person name="Nakajima Y."/>
            <person name="Mizuno T."/>
            <person name="Morinaga M."/>
            <person name="Sasaki M."/>
            <person name="Togashi T."/>
            <person name="Oyama M."/>
            <person name="Hata H."/>
            <person name="Watanabe M."/>
            <person name="Komatsu T."/>
            <person name="Mizushima-Sugano J."/>
            <person name="Satoh T."/>
            <person name="Shirai Y."/>
            <person name="Takahashi Y."/>
            <person name="Nakagawa K."/>
            <person name="Okumura K."/>
            <person name="Nagase T."/>
            <person name="Nomura N."/>
            <person name="Kikuchi H."/>
            <person name="Masuho Y."/>
            <person name="Yamashita R."/>
            <person name="Nakai K."/>
            <person name="Yada T."/>
            <person name="Nakamura Y."/>
            <person name="Ohara O."/>
            <person name="Isogai T."/>
            <person name="Sugano S."/>
        </authorList>
    </citation>
    <scope>NUCLEOTIDE SEQUENCE [LARGE SCALE MRNA]</scope>
    <source>
        <tissue>Caudate nucleus</tissue>
    </source>
</reference>
<reference evidence="9" key="4">
    <citation type="submission" date="2005-09" db="EMBL/GenBank/DDBJ databases">
        <authorList>
            <person name="Mural R.J."/>
            <person name="Istrail S."/>
            <person name="Sutton G.G."/>
            <person name="Florea L."/>
            <person name="Halpern A.L."/>
            <person name="Mobarry C.M."/>
            <person name="Lippert R."/>
            <person name="Walenz B."/>
            <person name="Shatkay H."/>
            <person name="Dew I."/>
            <person name="Miller J.R."/>
            <person name="Flanigan M.J."/>
            <person name="Edwards N.J."/>
            <person name="Bolanos R."/>
            <person name="Fasulo D."/>
            <person name="Halldorsson B.V."/>
            <person name="Hannenhalli S."/>
            <person name="Turner R."/>
            <person name="Yooseph S."/>
            <person name="Lu F."/>
            <person name="Nusskern D.R."/>
            <person name="Shue B.C."/>
            <person name="Zheng X.H."/>
            <person name="Zhong F."/>
            <person name="Delcher A.L."/>
            <person name="Huson D.H."/>
            <person name="Kravitz S.A."/>
            <person name="Mouchard L."/>
            <person name="Reinert K."/>
            <person name="Remington K.A."/>
            <person name="Clark A.G."/>
            <person name="Waterman M.S."/>
            <person name="Eichler E.E."/>
            <person name="Adams M.D."/>
            <person name="Hunkapiller M.W."/>
            <person name="Myers E.W."/>
            <person name="Venter J.C."/>
        </authorList>
    </citation>
    <scope>NUCLEOTIDE SEQUENCE [LARGE SCALE GENOMIC DNA]</scope>
</reference>
<reference evidence="10" key="5">
    <citation type="journal article" date="2004" name="Genome Res.">
        <title>The status, quality, and expansion of the NIH full-length cDNA project: the Mammalian Gene Collection (MGC).</title>
        <authorList>
            <consortium name="The MGC Project Team"/>
        </authorList>
    </citation>
    <scope>NUCLEOTIDE SEQUENCE [LARGE SCALE MRNA]</scope>
    <source>
        <tissue evidence="10">Skin</tissue>
    </source>
</reference>
<reference evidence="8" key="6">
    <citation type="journal article" date="2001" name="J. Biol. Chem.">
        <title>MRG15 activates the B-myb promoter through formation of a nuclear complex with the retinoblastoma protein and the novel protein PAM14.</title>
        <authorList>
            <person name="Leung J.K."/>
            <person name="Berube N."/>
            <person name="Venable S."/>
            <person name="Ahmed S."/>
            <person name="Timchenko N."/>
            <person name="Pereira-Smith O.M."/>
        </authorList>
    </citation>
    <scope>INTERACTION WITH MORF4L1</scope>
    <scope>SUBCELLULAR LOCATION</scope>
</reference>
<reference evidence="8" key="7">
    <citation type="journal article" date="2002" name="J. Biol. Chem.">
        <title>MRG15, a novel chromodomain protein, is present in two distinct multiprotein complexes involved in transcriptional activation.</title>
        <authorList>
            <person name="Pardo P.S."/>
            <person name="Leung J.K."/>
            <person name="Lucchesi J.C."/>
            <person name="Pereira-Smith O.M."/>
        </authorList>
    </citation>
    <scope>IDENTIFICATION IN A COMPLEX WITH MORF4L1 AND RB1</scope>
    <scope>SUBCELLULAR LOCATION</scope>
</reference>
<reference evidence="8" key="8">
    <citation type="journal article" date="2003" name="J. Biol. Chem.">
        <title>MRGX is a novel transcriptional regulator that exhibits activation or repression of the B-myb promoter in a cell type-dependent manner.</title>
        <authorList>
            <person name="Tominaga K."/>
            <person name="Leung J.K."/>
            <person name="Rookard P."/>
            <person name="Echigo J."/>
            <person name="Smith J.R."/>
            <person name="Pereira-Smith O.M."/>
        </authorList>
    </citation>
    <scope>INTERACTION WITH MORF4L2</scope>
</reference>
<reference evidence="8" key="9">
    <citation type="journal article" date="2006" name="Protein Sci.">
        <title>The MRG domain of human MRG15 uses a shallow hydrophobic pocket to interact with the N-terminal region of PAM14.</title>
        <authorList>
            <person name="Zhang P."/>
            <person name="Zhao J."/>
            <person name="Wang B."/>
            <person name="Du J."/>
            <person name="Lu Y."/>
            <person name="Chen J."/>
            <person name="Ding J."/>
        </authorList>
    </citation>
    <scope>INTERACTION WITH MORF4L1</scope>
</reference>
<reference key="10">
    <citation type="journal article" date="2011" name="BMC Syst. Biol.">
        <title>Initial characterization of the human central proteome.</title>
        <authorList>
            <person name="Burkard T.R."/>
            <person name="Planyavsky M."/>
            <person name="Kaupe I."/>
            <person name="Breitwieser F.P."/>
            <person name="Buerckstuemmer T."/>
            <person name="Bennett K.L."/>
            <person name="Superti-Furga G."/>
            <person name="Colinge J."/>
        </authorList>
    </citation>
    <scope>IDENTIFICATION BY MASS SPECTROMETRY [LARGE SCALE ANALYSIS]</scope>
</reference>
<proteinExistence type="evidence at protein level"/>
<gene>
    <name evidence="10" type="primary">MRFAP1</name>
    <name evidence="7" type="synonym">PAM14</name>
    <name evidence="9" type="synonym">PGR1</name>
</gene>
<dbReference type="EMBL" id="AF116272">
    <property type="protein sequence ID" value="AAD38498.1"/>
    <property type="molecule type" value="Genomic_DNA"/>
</dbReference>
<dbReference type="EMBL" id="CR457144">
    <property type="protein sequence ID" value="CAG33425.1"/>
    <property type="molecule type" value="mRNA"/>
</dbReference>
<dbReference type="EMBL" id="AK123360">
    <property type="protein sequence ID" value="BAG53894.1"/>
    <property type="molecule type" value="mRNA"/>
</dbReference>
<dbReference type="EMBL" id="CH471131">
    <property type="protein sequence ID" value="EAW82386.1"/>
    <property type="molecule type" value="Genomic_DNA"/>
</dbReference>
<dbReference type="EMBL" id="CH471131">
    <property type="protein sequence ID" value="EAW82387.1"/>
    <property type="molecule type" value="Genomic_DNA"/>
</dbReference>
<dbReference type="EMBL" id="BC022797">
    <property type="protein sequence ID" value="AAH22797.1"/>
    <property type="molecule type" value="mRNA"/>
</dbReference>
<dbReference type="CCDS" id="CCDS3389.1"/>
<dbReference type="RefSeq" id="NP_001258982.1">
    <property type="nucleotide sequence ID" value="NM_001272053.2"/>
</dbReference>
<dbReference type="RefSeq" id="NP_150638.1">
    <property type="nucleotide sequence ID" value="NM_033296.3"/>
</dbReference>
<dbReference type="SMR" id="Q9Y605"/>
<dbReference type="BioGRID" id="125039">
    <property type="interactions" value="112"/>
</dbReference>
<dbReference type="CORUM" id="Q9Y605"/>
<dbReference type="FunCoup" id="Q9Y605">
    <property type="interactions" value="901"/>
</dbReference>
<dbReference type="IntAct" id="Q9Y605">
    <property type="interactions" value="82"/>
</dbReference>
<dbReference type="MINT" id="Q9Y605"/>
<dbReference type="STRING" id="9606.ENSP00000318352"/>
<dbReference type="iPTMnet" id="Q9Y605"/>
<dbReference type="PhosphoSitePlus" id="Q9Y605"/>
<dbReference type="SwissPalm" id="Q9Y605"/>
<dbReference type="BioMuta" id="MRFAP1"/>
<dbReference type="DMDM" id="74735297"/>
<dbReference type="jPOST" id="Q9Y605"/>
<dbReference type="MassIVE" id="Q9Y605"/>
<dbReference type="PaxDb" id="9606-ENSP00000318352"/>
<dbReference type="PeptideAtlas" id="Q9Y605"/>
<dbReference type="ProteomicsDB" id="86568"/>
<dbReference type="Pumba" id="Q9Y605"/>
<dbReference type="Antibodypedia" id="43334">
    <property type="antibodies" value="91 antibodies from 20 providers"/>
</dbReference>
<dbReference type="DNASU" id="93621"/>
<dbReference type="Ensembl" id="ENST00000320912.8">
    <property type="protein sequence ID" value="ENSP00000318352.4"/>
    <property type="gene ID" value="ENSG00000179010.16"/>
</dbReference>
<dbReference type="Ensembl" id="ENST00000382581.5">
    <property type="protein sequence ID" value="ENSP00000372024.4"/>
    <property type="gene ID" value="ENSG00000179010.16"/>
</dbReference>
<dbReference type="Ensembl" id="ENST00000507420.1">
    <property type="protein sequence ID" value="ENSP00000422065.1"/>
    <property type="gene ID" value="ENSG00000179010.16"/>
</dbReference>
<dbReference type="GeneID" id="93621"/>
<dbReference type="KEGG" id="hsa:93621"/>
<dbReference type="MANE-Select" id="ENST00000382581.5">
    <property type="protein sequence ID" value="ENSP00000372024.4"/>
    <property type="RefSeq nucleotide sequence ID" value="NM_033296.3"/>
    <property type="RefSeq protein sequence ID" value="NP_150638.1"/>
</dbReference>
<dbReference type="UCSC" id="uc003gjg.3">
    <property type="organism name" value="human"/>
</dbReference>
<dbReference type="AGR" id="HGNC:24549"/>
<dbReference type="CTD" id="93621"/>
<dbReference type="DisGeNET" id="93621"/>
<dbReference type="GeneCards" id="MRFAP1"/>
<dbReference type="HGNC" id="HGNC:24549">
    <property type="gene designation" value="MRFAP1"/>
</dbReference>
<dbReference type="HPA" id="ENSG00000179010">
    <property type="expression patterns" value="Low tissue specificity"/>
</dbReference>
<dbReference type="MIM" id="616905">
    <property type="type" value="gene"/>
</dbReference>
<dbReference type="neXtProt" id="NX_Q9Y605"/>
<dbReference type="OpenTargets" id="ENSG00000179010"/>
<dbReference type="PharmGKB" id="PA142671332"/>
<dbReference type="VEuPathDB" id="HostDB:ENSG00000179010"/>
<dbReference type="eggNOG" id="ENOG502RU25">
    <property type="taxonomic scope" value="Eukaryota"/>
</dbReference>
<dbReference type="GeneTree" id="ENSGT00940000155541"/>
<dbReference type="HOGENOM" id="CLU_166966_1_0_1"/>
<dbReference type="InParanoid" id="Q9Y605"/>
<dbReference type="OMA" id="RVTKRCE"/>
<dbReference type="OrthoDB" id="9837479at2759"/>
<dbReference type="PAN-GO" id="Q9Y605">
    <property type="GO annotations" value="0 GO annotations based on evolutionary models"/>
</dbReference>
<dbReference type="PhylomeDB" id="Q9Y605"/>
<dbReference type="TreeFam" id="TF338232"/>
<dbReference type="PathwayCommons" id="Q9Y605"/>
<dbReference type="SignaLink" id="Q9Y605"/>
<dbReference type="BioGRID-ORCS" id="93621">
    <property type="hits" value="22 hits in 1154 CRISPR screens"/>
</dbReference>
<dbReference type="ChiTaRS" id="MRFAP1">
    <property type="organism name" value="human"/>
</dbReference>
<dbReference type="GeneWiki" id="MRFAP1"/>
<dbReference type="GenomeRNAi" id="93621"/>
<dbReference type="Pharos" id="Q9Y605">
    <property type="development level" value="Tbio"/>
</dbReference>
<dbReference type="PRO" id="PR:Q9Y605"/>
<dbReference type="Proteomes" id="UP000005640">
    <property type="component" value="Chromosome 4"/>
</dbReference>
<dbReference type="RNAct" id="Q9Y605">
    <property type="molecule type" value="protein"/>
</dbReference>
<dbReference type="Bgee" id="ENSG00000179010">
    <property type="expression patterns" value="Expressed in endothelial cell and 195 other cell types or tissues"/>
</dbReference>
<dbReference type="ExpressionAtlas" id="Q9Y605">
    <property type="expression patterns" value="baseline and differential"/>
</dbReference>
<dbReference type="GO" id="GO:0005654">
    <property type="term" value="C:nucleoplasm"/>
    <property type="evidence" value="ECO:0000314"/>
    <property type="project" value="HPA"/>
</dbReference>
<dbReference type="GO" id="GO:0048471">
    <property type="term" value="C:perinuclear region of cytoplasm"/>
    <property type="evidence" value="ECO:0007669"/>
    <property type="project" value="UniProtKB-SubCell"/>
</dbReference>
<dbReference type="InterPro" id="IPR029254">
    <property type="entry name" value="MRFAP1"/>
</dbReference>
<dbReference type="PANTHER" id="PTHR31324:SF1">
    <property type="entry name" value="MORF4 FAMILY-ASSOCIATED PROTEIN 1"/>
    <property type="match status" value="1"/>
</dbReference>
<dbReference type="PANTHER" id="PTHR31324">
    <property type="entry name" value="MORF4 FAMILY-ASSOCIATED PROTEIN 1-RELATED"/>
    <property type="match status" value="1"/>
</dbReference>
<dbReference type="Pfam" id="PF15155">
    <property type="entry name" value="MRFAP1"/>
    <property type="match status" value="1"/>
</dbReference>
<feature type="chain" id="PRO_0000306176" description="MORF4 family-associated protein 1">
    <location>
        <begin position="1"/>
        <end position="127"/>
    </location>
</feature>
<feature type="coiled-coil region" evidence="2">
    <location>
        <begin position="92"/>
        <end position="126"/>
    </location>
</feature>
<organism>
    <name type="scientific">Homo sapiens</name>
    <name type="common">Human</name>
    <dbReference type="NCBI Taxonomy" id="9606"/>
    <lineage>
        <taxon>Eukaryota</taxon>
        <taxon>Metazoa</taxon>
        <taxon>Chordata</taxon>
        <taxon>Craniata</taxon>
        <taxon>Vertebrata</taxon>
        <taxon>Euteleostomi</taxon>
        <taxon>Mammalia</taxon>
        <taxon>Eutheria</taxon>
        <taxon>Euarchontoglires</taxon>
        <taxon>Primates</taxon>
        <taxon>Haplorrhini</taxon>
        <taxon>Catarrhini</taxon>
        <taxon>Hominidae</taxon>
        <taxon>Homo</taxon>
    </lineage>
</organism>
<evidence type="ECO:0000250" key="1">
    <source>
        <dbReference type="UniProtKB" id="Q5M820"/>
    </source>
</evidence>
<evidence type="ECO:0000255" key="2"/>
<evidence type="ECO:0000269" key="3">
    <source>
    </source>
</evidence>
<evidence type="ECO:0000269" key="4">
    <source>
    </source>
</evidence>
<evidence type="ECO:0000269" key="5">
    <source>
    </source>
</evidence>
<evidence type="ECO:0000269" key="6">
    <source>
    </source>
</evidence>
<evidence type="ECO:0000303" key="7">
    <source>
    </source>
</evidence>
<evidence type="ECO:0000305" key="8"/>
<evidence type="ECO:0000312" key="9">
    <source>
        <dbReference type="EMBL" id="AAD38498.1"/>
    </source>
</evidence>
<evidence type="ECO:0000312" key="10">
    <source>
        <dbReference type="EMBL" id="AAH22797.1"/>
    </source>
</evidence>
<keyword id="KW-0175">Coiled coil</keyword>
<keyword id="KW-0963">Cytoplasm</keyword>
<keyword id="KW-0539">Nucleus</keyword>
<keyword id="KW-1267">Proteomics identification</keyword>
<keyword id="KW-1185">Reference proteome</keyword>
<protein>
    <recommendedName>
        <fullName>MORF4 family-associated protein 1</fullName>
    </recommendedName>
    <alternativeName>
        <fullName>Protein PGR1</fullName>
    </alternativeName>
    <alternativeName>
        <fullName>Protein associated with MRG of 14 kDa</fullName>
    </alternativeName>
</protein>
<name>MOFA1_HUMAN</name>